<accession>B1VH41</accession>
<name>RL35_CORU7</name>
<feature type="chain" id="PRO_1000127330" description="Large ribosomal subunit protein bL35">
    <location>
        <begin position="1"/>
        <end position="64"/>
    </location>
</feature>
<feature type="region of interest" description="Disordered" evidence="2">
    <location>
        <begin position="1"/>
        <end position="20"/>
    </location>
</feature>
<reference key="1">
    <citation type="journal article" date="2008" name="J. Biotechnol.">
        <title>The lifestyle of Corynebacterium urealyticum derived from its complete genome sequence established by pyrosequencing.</title>
        <authorList>
            <person name="Tauch A."/>
            <person name="Trost E."/>
            <person name="Tilker A."/>
            <person name="Ludewig U."/>
            <person name="Schneiker S."/>
            <person name="Goesmann A."/>
            <person name="Arnold W."/>
            <person name="Bekel T."/>
            <person name="Brinkrolf K."/>
            <person name="Brune I."/>
            <person name="Goetker S."/>
            <person name="Kalinowski J."/>
            <person name="Kamp P.-B."/>
            <person name="Lobo F.P."/>
            <person name="Viehoever P."/>
            <person name="Weisshaar B."/>
            <person name="Soriano F."/>
            <person name="Droege M."/>
            <person name="Puehler A."/>
        </authorList>
    </citation>
    <scope>NUCLEOTIDE SEQUENCE [LARGE SCALE GENOMIC DNA]</scope>
    <source>
        <strain>ATCC 43042 / DSM 7109</strain>
    </source>
</reference>
<evidence type="ECO:0000255" key="1">
    <source>
        <dbReference type="HAMAP-Rule" id="MF_00514"/>
    </source>
</evidence>
<evidence type="ECO:0000256" key="2">
    <source>
        <dbReference type="SAM" id="MobiDB-lite"/>
    </source>
</evidence>
<evidence type="ECO:0000305" key="3"/>
<proteinExistence type="inferred from homology"/>
<dbReference type="EMBL" id="AM942444">
    <property type="protein sequence ID" value="CAQ05082.1"/>
    <property type="molecule type" value="Genomic_DNA"/>
</dbReference>
<dbReference type="RefSeq" id="WP_012360370.1">
    <property type="nucleotide sequence ID" value="NC_010545.1"/>
</dbReference>
<dbReference type="SMR" id="B1VH41"/>
<dbReference type="STRING" id="504474.cu1122"/>
<dbReference type="GeneID" id="60603903"/>
<dbReference type="KEGG" id="cur:cu1122"/>
<dbReference type="eggNOG" id="COG0291">
    <property type="taxonomic scope" value="Bacteria"/>
</dbReference>
<dbReference type="HOGENOM" id="CLU_169643_4_2_11"/>
<dbReference type="Proteomes" id="UP000001727">
    <property type="component" value="Chromosome"/>
</dbReference>
<dbReference type="GO" id="GO:0022625">
    <property type="term" value="C:cytosolic large ribosomal subunit"/>
    <property type="evidence" value="ECO:0007669"/>
    <property type="project" value="TreeGrafter"/>
</dbReference>
<dbReference type="GO" id="GO:0003735">
    <property type="term" value="F:structural constituent of ribosome"/>
    <property type="evidence" value="ECO:0007669"/>
    <property type="project" value="InterPro"/>
</dbReference>
<dbReference type="GO" id="GO:0006412">
    <property type="term" value="P:translation"/>
    <property type="evidence" value="ECO:0007669"/>
    <property type="project" value="UniProtKB-UniRule"/>
</dbReference>
<dbReference type="FunFam" id="4.10.410.60:FF:000001">
    <property type="entry name" value="50S ribosomal protein L35"/>
    <property type="match status" value="1"/>
</dbReference>
<dbReference type="Gene3D" id="4.10.410.60">
    <property type="match status" value="1"/>
</dbReference>
<dbReference type="HAMAP" id="MF_00514">
    <property type="entry name" value="Ribosomal_bL35"/>
    <property type="match status" value="1"/>
</dbReference>
<dbReference type="InterPro" id="IPR001706">
    <property type="entry name" value="Ribosomal_bL35"/>
</dbReference>
<dbReference type="InterPro" id="IPR021137">
    <property type="entry name" value="Ribosomal_bL35-like"/>
</dbReference>
<dbReference type="InterPro" id="IPR037229">
    <property type="entry name" value="Ribosomal_bL35_sf"/>
</dbReference>
<dbReference type="NCBIfam" id="TIGR00001">
    <property type="entry name" value="rpmI_bact"/>
    <property type="match status" value="1"/>
</dbReference>
<dbReference type="PANTHER" id="PTHR33343">
    <property type="entry name" value="54S RIBOSOMAL PROTEIN BL35M"/>
    <property type="match status" value="1"/>
</dbReference>
<dbReference type="PANTHER" id="PTHR33343:SF1">
    <property type="entry name" value="LARGE RIBOSOMAL SUBUNIT PROTEIN BL35M"/>
    <property type="match status" value="1"/>
</dbReference>
<dbReference type="Pfam" id="PF01632">
    <property type="entry name" value="Ribosomal_L35p"/>
    <property type="match status" value="1"/>
</dbReference>
<dbReference type="PRINTS" id="PR00064">
    <property type="entry name" value="RIBOSOMALL35"/>
</dbReference>
<dbReference type="SUPFAM" id="SSF143034">
    <property type="entry name" value="L35p-like"/>
    <property type="match status" value="1"/>
</dbReference>
<comment type="similarity">
    <text evidence="1">Belongs to the bacterial ribosomal protein bL35 family.</text>
</comment>
<protein>
    <recommendedName>
        <fullName evidence="1">Large ribosomal subunit protein bL35</fullName>
    </recommendedName>
    <alternativeName>
        <fullName evidence="3">50S ribosomal protein L35</fullName>
    </alternativeName>
</protein>
<organism>
    <name type="scientific">Corynebacterium urealyticum (strain ATCC 43042 / DSM 7109)</name>
    <dbReference type="NCBI Taxonomy" id="504474"/>
    <lineage>
        <taxon>Bacteria</taxon>
        <taxon>Bacillati</taxon>
        <taxon>Actinomycetota</taxon>
        <taxon>Actinomycetes</taxon>
        <taxon>Mycobacteriales</taxon>
        <taxon>Corynebacteriaceae</taxon>
        <taxon>Corynebacterium</taxon>
    </lineage>
</organism>
<sequence length="64" mass="7331">MKQKTHKGTAKRIKVTGSGKLRRERAYRRHLLEGKPSTRTRRLKGTTDVSAADNKRMKRLLGKA</sequence>
<keyword id="KW-1185">Reference proteome</keyword>
<keyword id="KW-0687">Ribonucleoprotein</keyword>
<keyword id="KW-0689">Ribosomal protein</keyword>
<gene>
    <name evidence="1" type="primary">rpmI</name>
    <name type="ordered locus">cu1122</name>
</gene>